<organism>
    <name type="scientific">Gloeobacter violaceus (strain ATCC 29082 / PCC 7421)</name>
    <dbReference type="NCBI Taxonomy" id="251221"/>
    <lineage>
        <taxon>Bacteria</taxon>
        <taxon>Bacillati</taxon>
        <taxon>Cyanobacteriota</taxon>
        <taxon>Cyanophyceae</taxon>
        <taxon>Gloeobacterales</taxon>
        <taxon>Gloeobacteraceae</taxon>
        <taxon>Gloeobacter</taxon>
    </lineage>
</organism>
<proteinExistence type="inferred from homology"/>
<accession>Q7NGM0</accession>
<feature type="chain" id="PRO_0000329664" description="Polyribonucleotide nucleotidyltransferase">
    <location>
        <begin position="1"/>
        <end position="713"/>
    </location>
</feature>
<feature type="domain" description="KH" evidence="1">
    <location>
        <begin position="562"/>
        <end position="621"/>
    </location>
</feature>
<feature type="domain" description="S1 motif" evidence="1">
    <location>
        <begin position="631"/>
        <end position="700"/>
    </location>
</feature>
<feature type="binding site" evidence="1">
    <location>
        <position position="495"/>
    </location>
    <ligand>
        <name>Mg(2+)</name>
        <dbReference type="ChEBI" id="CHEBI:18420"/>
    </ligand>
</feature>
<feature type="binding site" evidence="1">
    <location>
        <position position="501"/>
    </location>
    <ligand>
        <name>Mg(2+)</name>
        <dbReference type="ChEBI" id="CHEBI:18420"/>
    </ligand>
</feature>
<gene>
    <name evidence="1" type="primary">pnp</name>
    <name type="ordered locus">gll3149</name>
</gene>
<comment type="function">
    <text evidence="1">Involved in mRNA degradation. Catalyzes the phosphorolysis of single-stranded polyribonucleotides processively in the 3'- to 5'-direction.</text>
</comment>
<comment type="catalytic activity">
    <reaction evidence="1">
        <text>RNA(n+1) + phosphate = RNA(n) + a ribonucleoside 5'-diphosphate</text>
        <dbReference type="Rhea" id="RHEA:22096"/>
        <dbReference type="Rhea" id="RHEA-COMP:14527"/>
        <dbReference type="Rhea" id="RHEA-COMP:17342"/>
        <dbReference type="ChEBI" id="CHEBI:43474"/>
        <dbReference type="ChEBI" id="CHEBI:57930"/>
        <dbReference type="ChEBI" id="CHEBI:140395"/>
        <dbReference type="EC" id="2.7.7.8"/>
    </reaction>
</comment>
<comment type="cofactor">
    <cofactor evidence="1">
        <name>Mg(2+)</name>
        <dbReference type="ChEBI" id="CHEBI:18420"/>
    </cofactor>
</comment>
<comment type="subcellular location">
    <subcellularLocation>
        <location evidence="1">Cytoplasm</location>
    </subcellularLocation>
</comment>
<comment type="similarity">
    <text evidence="1">Belongs to the polyribonucleotide nucleotidyltransferase family.</text>
</comment>
<dbReference type="EC" id="2.7.7.8" evidence="1"/>
<dbReference type="EMBL" id="BA000045">
    <property type="protein sequence ID" value="BAC91090.1"/>
    <property type="molecule type" value="Genomic_DNA"/>
</dbReference>
<dbReference type="RefSeq" id="NP_926095.1">
    <property type="nucleotide sequence ID" value="NC_005125.1"/>
</dbReference>
<dbReference type="RefSeq" id="WP_011143141.1">
    <property type="nucleotide sequence ID" value="NC_005125.1"/>
</dbReference>
<dbReference type="SMR" id="Q7NGM0"/>
<dbReference type="FunCoup" id="Q7NGM0">
    <property type="interactions" value="303"/>
</dbReference>
<dbReference type="STRING" id="251221.gene:10760655"/>
<dbReference type="EnsemblBacteria" id="BAC91090">
    <property type="protein sequence ID" value="BAC91090"/>
    <property type="gene ID" value="BAC91090"/>
</dbReference>
<dbReference type="KEGG" id="gvi:gll3149"/>
<dbReference type="PATRIC" id="fig|251221.4.peg.3180"/>
<dbReference type="eggNOG" id="COG1185">
    <property type="taxonomic scope" value="Bacteria"/>
</dbReference>
<dbReference type="HOGENOM" id="CLU_004217_2_2_3"/>
<dbReference type="InParanoid" id="Q7NGM0"/>
<dbReference type="OrthoDB" id="9804305at2"/>
<dbReference type="PhylomeDB" id="Q7NGM0"/>
<dbReference type="Proteomes" id="UP000000557">
    <property type="component" value="Chromosome"/>
</dbReference>
<dbReference type="GO" id="GO:0005829">
    <property type="term" value="C:cytosol"/>
    <property type="evidence" value="ECO:0000318"/>
    <property type="project" value="GO_Central"/>
</dbReference>
<dbReference type="GO" id="GO:0000175">
    <property type="term" value="F:3'-5'-RNA exonuclease activity"/>
    <property type="evidence" value="ECO:0000318"/>
    <property type="project" value="GO_Central"/>
</dbReference>
<dbReference type="GO" id="GO:0000287">
    <property type="term" value="F:magnesium ion binding"/>
    <property type="evidence" value="ECO:0007669"/>
    <property type="project" value="UniProtKB-UniRule"/>
</dbReference>
<dbReference type="GO" id="GO:0004654">
    <property type="term" value="F:polyribonucleotide nucleotidyltransferase activity"/>
    <property type="evidence" value="ECO:0000318"/>
    <property type="project" value="GO_Central"/>
</dbReference>
<dbReference type="GO" id="GO:0003723">
    <property type="term" value="F:RNA binding"/>
    <property type="evidence" value="ECO:0007669"/>
    <property type="project" value="UniProtKB-UniRule"/>
</dbReference>
<dbReference type="GO" id="GO:0006402">
    <property type="term" value="P:mRNA catabolic process"/>
    <property type="evidence" value="ECO:0007669"/>
    <property type="project" value="UniProtKB-UniRule"/>
</dbReference>
<dbReference type="GO" id="GO:0006401">
    <property type="term" value="P:RNA catabolic process"/>
    <property type="evidence" value="ECO:0000318"/>
    <property type="project" value="GO_Central"/>
</dbReference>
<dbReference type="GO" id="GO:0006396">
    <property type="term" value="P:RNA processing"/>
    <property type="evidence" value="ECO:0007669"/>
    <property type="project" value="InterPro"/>
</dbReference>
<dbReference type="CDD" id="cd02393">
    <property type="entry name" value="KH-I_PNPase"/>
    <property type="match status" value="1"/>
</dbReference>
<dbReference type="CDD" id="cd11363">
    <property type="entry name" value="RNase_PH_PNPase_1"/>
    <property type="match status" value="1"/>
</dbReference>
<dbReference type="CDD" id="cd11364">
    <property type="entry name" value="RNase_PH_PNPase_2"/>
    <property type="match status" value="1"/>
</dbReference>
<dbReference type="CDD" id="cd04472">
    <property type="entry name" value="S1_PNPase"/>
    <property type="match status" value="1"/>
</dbReference>
<dbReference type="FunFam" id="2.40.50.140:FF:000023">
    <property type="entry name" value="Polyribonucleotide nucleotidyltransferase"/>
    <property type="match status" value="1"/>
</dbReference>
<dbReference type="FunFam" id="3.30.1370.10:FF:000001">
    <property type="entry name" value="Polyribonucleotide nucleotidyltransferase"/>
    <property type="match status" value="1"/>
</dbReference>
<dbReference type="FunFam" id="3.30.230.70:FF:000001">
    <property type="entry name" value="Polyribonucleotide nucleotidyltransferase"/>
    <property type="match status" value="1"/>
</dbReference>
<dbReference type="FunFam" id="3.30.230.70:FF:000002">
    <property type="entry name" value="Polyribonucleotide nucleotidyltransferase"/>
    <property type="match status" value="1"/>
</dbReference>
<dbReference type="Gene3D" id="3.30.230.70">
    <property type="entry name" value="GHMP Kinase, N-terminal domain"/>
    <property type="match status" value="2"/>
</dbReference>
<dbReference type="Gene3D" id="3.30.1370.10">
    <property type="entry name" value="K Homology domain, type 1"/>
    <property type="match status" value="1"/>
</dbReference>
<dbReference type="Gene3D" id="2.40.50.140">
    <property type="entry name" value="Nucleic acid-binding proteins"/>
    <property type="match status" value="1"/>
</dbReference>
<dbReference type="HAMAP" id="MF_01595">
    <property type="entry name" value="PNPase"/>
    <property type="match status" value="1"/>
</dbReference>
<dbReference type="InterPro" id="IPR001247">
    <property type="entry name" value="ExoRNase_PH_dom1"/>
</dbReference>
<dbReference type="InterPro" id="IPR015847">
    <property type="entry name" value="ExoRNase_PH_dom2"/>
</dbReference>
<dbReference type="InterPro" id="IPR036345">
    <property type="entry name" value="ExoRNase_PH_dom2_sf"/>
</dbReference>
<dbReference type="InterPro" id="IPR004087">
    <property type="entry name" value="KH_dom"/>
</dbReference>
<dbReference type="InterPro" id="IPR004088">
    <property type="entry name" value="KH_dom_type_1"/>
</dbReference>
<dbReference type="InterPro" id="IPR036612">
    <property type="entry name" value="KH_dom_type_1_sf"/>
</dbReference>
<dbReference type="InterPro" id="IPR012340">
    <property type="entry name" value="NA-bd_OB-fold"/>
</dbReference>
<dbReference type="InterPro" id="IPR012162">
    <property type="entry name" value="PNPase"/>
</dbReference>
<dbReference type="InterPro" id="IPR027408">
    <property type="entry name" value="PNPase/RNase_PH_dom_sf"/>
</dbReference>
<dbReference type="InterPro" id="IPR015848">
    <property type="entry name" value="PNPase_PH_RNA-bd_bac/org-type"/>
</dbReference>
<dbReference type="InterPro" id="IPR020568">
    <property type="entry name" value="Ribosomal_Su5_D2-typ_SF"/>
</dbReference>
<dbReference type="InterPro" id="IPR003029">
    <property type="entry name" value="S1_domain"/>
</dbReference>
<dbReference type="NCBIfam" id="TIGR03591">
    <property type="entry name" value="polynuc_phos"/>
    <property type="match status" value="1"/>
</dbReference>
<dbReference type="NCBIfam" id="NF008805">
    <property type="entry name" value="PRK11824.1"/>
    <property type="match status" value="1"/>
</dbReference>
<dbReference type="PANTHER" id="PTHR11252">
    <property type="entry name" value="POLYRIBONUCLEOTIDE NUCLEOTIDYLTRANSFERASE"/>
    <property type="match status" value="1"/>
</dbReference>
<dbReference type="PANTHER" id="PTHR11252:SF0">
    <property type="entry name" value="POLYRIBONUCLEOTIDE NUCLEOTIDYLTRANSFERASE 1, MITOCHONDRIAL"/>
    <property type="match status" value="1"/>
</dbReference>
<dbReference type="Pfam" id="PF00013">
    <property type="entry name" value="KH_1"/>
    <property type="match status" value="1"/>
</dbReference>
<dbReference type="Pfam" id="PF03726">
    <property type="entry name" value="PNPase"/>
    <property type="match status" value="1"/>
</dbReference>
<dbReference type="Pfam" id="PF01138">
    <property type="entry name" value="RNase_PH"/>
    <property type="match status" value="2"/>
</dbReference>
<dbReference type="Pfam" id="PF03725">
    <property type="entry name" value="RNase_PH_C"/>
    <property type="match status" value="2"/>
</dbReference>
<dbReference type="Pfam" id="PF00575">
    <property type="entry name" value="S1"/>
    <property type="match status" value="1"/>
</dbReference>
<dbReference type="PIRSF" id="PIRSF005499">
    <property type="entry name" value="PNPase"/>
    <property type="match status" value="1"/>
</dbReference>
<dbReference type="SMART" id="SM00322">
    <property type="entry name" value="KH"/>
    <property type="match status" value="1"/>
</dbReference>
<dbReference type="SMART" id="SM00316">
    <property type="entry name" value="S1"/>
    <property type="match status" value="1"/>
</dbReference>
<dbReference type="SUPFAM" id="SSF54791">
    <property type="entry name" value="Eukaryotic type KH-domain (KH-domain type I)"/>
    <property type="match status" value="1"/>
</dbReference>
<dbReference type="SUPFAM" id="SSF50249">
    <property type="entry name" value="Nucleic acid-binding proteins"/>
    <property type="match status" value="1"/>
</dbReference>
<dbReference type="SUPFAM" id="SSF55666">
    <property type="entry name" value="Ribonuclease PH domain 2-like"/>
    <property type="match status" value="2"/>
</dbReference>
<dbReference type="SUPFAM" id="SSF54211">
    <property type="entry name" value="Ribosomal protein S5 domain 2-like"/>
    <property type="match status" value="2"/>
</dbReference>
<dbReference type="PROSITE" id="PS50084">
    <property type="entry name" value="KH_TYPE_1"/>
    <property type="match status" value="1"/>
</dbReference>
<dbReference type="PROSITE" id="PS50126">
    <property type="entry name" value="S1"/>
    <property type="match status" value="1"/>
</dbReference>
<reference key="1">
    <citation type="journal article" date="2003" name="DNA Res.">
        <title>Complete genome structure of Gloeobacter violaceus PCC 7421, a cyanobacterium that lacks thylakoids.</title>
        <authorList>
            <person name="Nakamura Y."/>
            <person name="Kaneko T."/>
            <person name="Sato S."/>
            <person name="Mimuro M."/>
            <person name="Miyashita H."/>
            <person name="Tsuchiya T."/>
            <person name="Sasamoto S."/>
            <person name="Watanabe A."/>
            <person name="Kawashima K."/>
            <person name="Kishida Y."/>
            <person name="Kiyokawa C."/>
            <person name="Kohara M."/>
            <person name="Matsumoto M."/>
            <person name="Matsuno A."/>
            <person name="Nakazaki N."/>
            <person name="Shimpo S."/>
            <person name="Takeuchi C."/>
            <person name="Yamada M."/>
            <person name="Tabata S."/>
        </authorList>
    </citation>
    <scope>NUCLEOTIDE SEQUENCE [LARGE SCALE GENOMIC DNA]</scope>
    <source>
        <strain>ATCC 29082 / PCC 7421</strain>
    </source>
</reference>
<evidence type="ECO:0000255" key="1">
    <source>
        <dbReference type="HAMAP-Rule" id="MF_01595"/>
    </source>
</evidence>
<keyword id="KW-0963">Cytoplasm</keyword>
<keyword id="KW-0460">Magnesium</keyword>
<keyword id="KW-0479">Metal-binding</keyword>
<keyword id="KW-0548">Nucleotidyltransferase</keyword>
<keyword id="KW-1185">Reference proteome</keyword>
<keyword id="KW-0694">RNA-binding</keyword>
<keyword id="KW-0808">Transferase</keyword>
<sequence>MIEYRKSVTVHGREIGLSTGVLAQLAGGSVLVQSGETAVLVTATMASKPREGIDFFPLLVDYEERLYAAGRIPGSFVRREGRPPEKAILAARLIDRPLRPLFPKGFINDVQIVATVLALDMNVPPDILAILGASTATMLAGIPFDGPVAATRVGLMGDDFIINPTYKEIEEGELDLVVAGTKNGIMMVEAGANCLPEEDIIDAIDYGYEAVQAMLTAQEEFIRDLKIEPMAFVAPANDPVLVSFVEEKASEAVAEVLRSFELSKDERDAKLDAIEAELGTTFAGLGEEDPLREKAAANASKLPALFKSTTKKLMRKQILVEGKRVDGRSLDEVRPISSAVRVIPRVHGCGLFTRGTTQVLSVVTLGTASDAQELDDLHPDDSKRYMHHYNFPGFSVGEVKPLRGVGRREVGHGALAERAIVPILPEHEQFPYVIRVVSEVLSSNGSTSMGSVCASTLALMDAGVPIREPVSGVAMGLIKEGDEVRILTDIQGIEDFLGDMDFKVAGTRDGITALQMDIKIQGITLQILEAAIQQSKAGRLHILEKMLIAIDKPRVELSPYAPRLLTLKIPVDMIGLVIGPGGKTIKRIVEETGAKVDIEDDGTVVVSSIDGAKALAAKQIIEGMTRTVEVDKVYLGTVTRIIPNLGAFVEVMPGKEGLVHISQLAEHRVRKVEDELNVGDEVVVKVKEIDQKGRINLTRRGIHPSEVEEARGQ</sequence>
<name>PNP_GLOVI</name>
<protein>
    <recommendedName>
        <fullName evidence="1">Polyribonucleotide nucleotidyltransferase</fullName>
        <ecNumber evidence="1">2.7.7.8</ecNumber>
    </recommendedName>
    <alternativeName>
        <fullName evidence="1">Polynucleotide phosphorylase</fullName>
        <shortName evidence="1">PNPase</shortName>
    </alternativeName>
</protein>